<sequence>MSWMQNLKNYQHLRDPSEYMSQVYGDPLAYLQENTKFVTEREYYEDFGYGECFNSSESEVQCELITGEFDPKLLPYDKRLAWHFKEFCYKTSAHGIPMIGEAPNVYYRAVWVMLFLGCMIMLYLNAQSVLDKYNRNEKIVDIQLKFDTAPFPAITLCNLNPYKASLATSVDLVKRTLSAFDGAMGKAGGNKEHDGEKEVITEAPTTPAPTTKPSRRRGKRDLSGAFFEPGFARCLCGSQGSSEQEDKDDEKEEEMHETTTRKPFNINDADEEWDGMEEYDNNEHYENYDVEATTGMNMMEECQSERTKFDEPTGFDDRCICAFDRSTHDAWPCFLNGTWETTECDTCNEHAFCTKDNKTAKGHRSPCICAPSKFCVAYNGKTPPIEIWTYLQGGTPTEDPNFLEAMGFQGMTDEVAIVTKAKENMFAMATLSMQDRERLSTTKRELVHKCSFNGKACDIEADFLTHIDPVFGSCFTFNHNRTVNLTSIRAGPMYGLRMLVYVNASDYMPTTEATGVRLTIHDKEDFPFPDTFGYSAPTGYVSSFGLRLRKMSRLPAPYGDCVPDGKTSDYIYSNYEYSVEGCYRSCFQQLVLKECRCGDPRFPVPEGARHCDAADPVARRCLDARMNDLGGLHGSFRCRCQQPCRQSIYSVTYSPAKWPSLSLQIQLGSCNGTAVECNKHYKENGAMVEVFYEQLNFEMLTESEAYGFVNLLADFGGQLGLWCGISFLTCCEFVFLFLETAYMSAEHNYSLYKKKKAEKAKKVASGSF</sequence>
<comment type="function">
    <text evidence="1">Probable sodium channel subunit. May be needed for mechanosensory transduction (touch sensitivity). Negatively regulates the turning step of male mating behavior.</text>
</comment>
<comment type="subunit">
    <text evidence="1">The channel is probably composed of at least the mec-2, mec-4, mec-6 and mec-10 subunits.</text>
</comment>
<comment type="subcellular location">
    <subcellularLocation>
        <location evidence="2">Membrane</location>
        <topology evidence="2">Multi-pass membrane protein</topology>
    </subcellularLocation>
</comment>
<comment type="similarity">
    <text evidence="4">Belongs to the amiloride-sensitive sodium channel (TC 1.A.6) family.</text>
</comment>
<evidence type="ECO:0000250" key="1">
    <source>
        <dbReference type="UniProtKB" id="P24612"/>
    </source>
</evidence>
<evidence type="ECO:0000255" key="2"/>
<evidence type="ECO:0000256" key="3">
    <source>
        <dbReference type="SAM" id="MobiDB-lite"/>
    </source>
</evidence>
<evidence type="ECO:0000305" key="4"/>
<name>MEC4_CAEBR</name>
<proteinExistence type="inferred from homology"/>
<protein>
    <recommendedName>
        <fullName>Degenerin mec-4</fullName>
    </recommendedName>
    <alternativeName>
        <fullName>Mechanosensory protein 4</fullName>
    </alternativeName>
</protein>
<reference key="1">
    <citation type="journal article" date="1996" name="J. Cell Biol.">
        <title>Sequence and transmembrane topology of MEC-4, an ion channel subunit required for mechanotransduction in Caenorhabditis elegans.</title>
        <authorList>
            <person name="Lai C.C."/>
            <person name="Hong K."/>
            <person name="Kinnell M."/>
            <person name="Chalfie M."/>
            <person name="Driscoll M."/>
        </authorList>
    </citation>
    <scope>NUCLEOTIDE SEQUENCE [GENOMIC DNA]</scope>
</reference>
<reference key="2">
    <citation type="journal article" date="2003" name="PLoS Biol.">
        <title>The genome sequence of Caenorhabditis briggsae: a platform for comparative genomics.</title>
        <authorList>
            <person name="Stein L.D."/>
            <person name="Bao Z."/>
            <person name="Blasiar D."/>
            <person name="Blumenthal T."/>
            <person name="Brent M.R."/>
            <person name="Chen N."/>
            <person name="Chinwalla A."/>
            <person name="Clarke L."/>
            <person name="Clee C."/>
            <person name="Coghlan A."/>
            <person name="Coulson A."/>
            <person name="D'Eustachio P."/>
            <person name="Fitch D.H.A."/>
            <person name="Fulton L.A."/>
            <person name="Fulton R.E."/>
            <person name="Griffiths-Jones S."/>
            <person name="Harris T.W."/>
            <person name="Hillier L.W."/>
            <person name="Kamath R."/>
            <person name="Kuwabara P.E."/>
            <person name="Mardis E.R."/>
            <person name="Marra M.A."/>
            <person name="Miner T.L."/>
            <person name="Minx P."/>
            <person name="Mullikin J.C."/>
            <person name="Plumb R.W."/>
            <person name="Rogers J."/>
            <person name="Schein J.E."/>
            <person name="Sohrmann M."/>
            <person name="Spieth J."/>
            <person name="Stajich J.E."/>
            <person name="Wei C."/>
            <person name="Willey D."/>
            <person name="Wilson R.K."/>
            <person name="Durbin R.M."/>
            <person name="Waterston R.H."/>
        </authorList>
    </citation>
    <scope>NUCLEOTIDE SEQUENCE [LARGE SCALE GENOMIC DNA]</scope>
    <source>
        <strain>AF16</strain>
    </source>
</reference>
<gene>
    <name type="primary">mec-4</name>
    <name type="ORF">CBG16250</name>
</gene>
<accession>Q17298</accession>
<accession>A8XNT4</accession>
<accession>Q613Q9</accession>
<keyword id="KW-0325">Glycoprotein</keyword>
<keyword id="KW-0407">Ion channel</keyword>
<keyword id="KW-0406">Ion transport</keyword>
<keyword id="KW-0472">Membrane</keyword>
<keyword id="KW-0523">Neurodegeneration</keyword>
<keyword id="KW-1185">Reference proteome</keyword>
<keyword id="KW-0915">Sodium</keyword>
<keyword id="KW-0894">Sodium channel</keyword>
<keyword id="KW-0739">Sodium transport</keyword>
<keyword id="KW-0812">Transmembrane</keyword>
<keyword id="KW-1133">Transmembrane helix</keyword>
<keyword id="KW-0813">Transport</keyword>
<organism>
    <name type="scientific">Caenorhabditis briggsae</name>
    <dbReference type="NCBI Taxonomy" id="6238"/>
    <lineage>
        <taxon>Eukaryota</taxon>
        <taxon>Metazoa</taxon>
        <taxon>Ecdysozoa</taxon>
        <taxon>Nematoda</taxon>
        <taxon>Chromadorea</taxon>
        <taxon>Rhabditida</taxon>
        <taxon>Rhabditina</taxon>
        <taxon>Rhabditomorpha</taxon>
        <taxon>Rhabditoidea</taxon>
        <taxon>Rhabditidae</taxon>
        <taxon>Peloderinae</taxon>
        <taxon>Caenorhabditis</taxon>
    </lineage>
</organism>
<feature type="chain" id="PRO_0000181286" description="Degenerin mec-4">
    <location>
        <begin position="1"/>
        <end position="768"/>
    </location>
</feature>
<feature type="topological domain" description="Cytoplasmic" evidence="2">
    <location>
        <begin position="1"/>
        <end position="109"/>
    </location>
</feature>
<feature type="transmembrane region" description="Helical" evidence="2">
    <location>
        <begin position="110"/>
        <end position="130"/>
    </location>
</feature>
<feature type="topological domain" description="Extracellular" evidence="2">
    <location>
        <begin position="131"/>
        <end position="718"/>
    </location>
</feature>
<feature type="transmembrane region" description="Helical" evidence="2">
    <location>
        <begin position="719"/>
        <end position="739"/>
    </location>
</feature>
<feature type="topological domain" description="Cytoplasmic" evidence="2">
    <location>
        <begin position="740"/>
        <end position="768"/>
    </location>
</feature>
<feature type="region of interest" description="Disordered" evidence="3">
    <location>
        <begin position="187"/>
        <end position="221"/>
    </location>
</feature>
<feature type="region of interest" description="Disordered" evidence="3">
    <location>
        <begin position="237"/>
        <end position="260"/>
    </location>
</feature>
<feature type="compositionally biased region" description="Basic and acidic residues" evidence="3">
    <location>
        <begin position="189"/>
        <end position="200"/>
    </location>
</feature>
<feature type="compositionally biased region" description="Low complexity" evidence="3">
    <location>
        <begin position="203"/>
        <end position="212"/>
    </location>
</feature>
<feature type="compositionally biased region" description="Acidic residues" evidence="3">
    <location>
        <begin position="243"/>
        <end position="252"/>
    </location>
</feature>
<feature type="glycosylation site" description="N-linked (GlcNAc...) asparagine" evidence="2">
    <location>
        <position position="336"/>
    </location>
</feature>
<feature type="glycosylation site" description="N-linked (GlcNAc...) asparagine" evidence="2">
    <location>
        <position position="357"/>
    </location>
</feature>
<feature type="glycosylation site" description="N-linked (GlcNAc...) asparagine" evidence="2">
    <location>
        <position position="480"/>
    </location>
</feature>
<feature type="glycosylation site" description="N-linked (GlcNAc...) asparagine" evidence="2">
    <location>
        <position position="484"/>
    </location>
</feature>
<feature type="glycosylation site" description="N-linked (GlcNAc...) asparagine" evidence="2">
    <location>
        <position position="503"/>
    </location>
</feature>
<feature type="glycosylation site" description="N-linked (GlcNAc...) asparagine" evidence="2">
    <location>
        <position position="671"/>
    </location>
</feature>
<feature type="sequence conflict" description="In Ref. 1; AAC47264." evidence="4" ref="1">
    <original>N</original>
    <variation>NI</variation>
    <location>
        <position position="424"/>
    </location>
</feature>
<feature type="sequence conflict" description="In Ref. 1; AAC47264." evidence="4" ref="1">
    <original>R</original>
    <variation>G</variation>
    <location>
        <position position="645"/>
    </location>
</feature>
<dbReference type="EMBL" id="U53670">
    <property type="protein sequence ID" value="AAC47264.1"/>
    <property type="molecule type" value="Genomic_DNA"/>
</dbReference>
<dbReference type="EMBL" id="HE600961">
    <property type="protein sequence ID" value="CAP34173.3"/>
    <property type="molecule type" value="Genomic_DNA"/>
</dbReference>
<dbReference type="SMR" id="Q17298"/>
<dbReference type="FunCoup" id="Q17298">
    <property type="interactions" value="23"/>
</dbReference>
<dbReference type="STRING" id="6238.Q17298"/>
<dbReference type="GlyCosmos" id="Q17298">
    <property type="glycosylation" value="6 sites, No reported glycans"/>
</dbReference>
<dbReference type="EnsemblMetazoa" id="CBG16250.1">
    <property type="protein sequence ID" value="CBG16250.1"/>
    <property type="gene ID" value="WBGene00036254"/>
</dbReference>
<dbReference type="WormBase" id="CBG16250">
    <property type="protein sequence ID" value="CBP37569"/>
    <property type="gene ID" value="WBGene00036254"/>
    <property type="gene designation" value="Cbr-mec-4"/>
</dbReference>
<dbReference type="eggNOG" id="KOG4294">
    <property type="taxonomic scope" value="Eukaryota"/>
</dbReference>
<dbReference type="HOGENOM" id="CLU_017673_0_0_1"/>
<dbReference type="InParanoid" id="Q17298"/>
<dbReference type="OMA" id="KYNRNEK"/>
<dbReference type="Proteomes" id="UP000008549">
    <property type="component" value="Unassembled WGS sequence"/>
</dbReference>
<dbReference type="GO" id="GO:0030424">
    <property type="term" value="C:axon"/>
    <property type="evidence" value="ECO:0007669"/>
    <property type="project" value="EnsemblMetazoa"/>
</dbReference>
<dbReference type="GO" id="GO:0032589">
    <property type="term" value="C:neuron projection membrane"/>
    <property type="evidence" value="ECO:0007669"/>
    <property type="project" value="EnsemblMetazoa"/>
</dbReference>
<dbReference type="GO" id="GO:0005886">
    <property type="term" value="C:plasma membrane"/>
    <property type="evidence" value="ECO:0000318"/>
    <property type="project" value="GO_Central"/>
</dbReference>
<dbReference type="GO" id="GO:0015280">
    <property type="term" value="F:ligand-gated sodium channel activity"/>
    <property type="evidence" value="ECO:0000318"/>
    <property type="project" value="GO_Central"/>
</dbReference>
<dbReference type="GO" id="GO:0050976">
    <property type="term" value="P:detection of mechanical stimulus involved in sensory perception of touch"/>
    <property type="evidence" value="ECO:0007669"/>
    <property type="project" value="EnsemblMetazoa"/>
</dbReference>
<dbReference type="GO" id="GO:0007638">
    <property type="term" value="P:mechanosensory behavior"/>
    <property type="evidence" value="ECO:0007669"/>
    <property type="project" value="EnsemblMetazoa"/>
</dbReference>
<dbReference type="GO" id="GO:0061096">
    <property type="term" value="P:negative regulation of turning behavior involved in mating"/>
    <property type="evidence" value="ECO:0007669"/>
    <property type="project" value="EnsemblMetazoa"/>
</dbReference>
<dbReference type="GO" id="GO:1905789">
    <property type="term" value="P:positive regulation of detection of mechanical stimulus involved in sensory perception of touch"/>
    <property type="evidence" value="ECO:0007669"/>
    <property type="project" value="EnsemblMetazoa"/>
</dbReference>
<dbReference type="GO" id="GO:1905792">
    <property type="term" value="P:positive regulation of mechanosensory behavior"/>
    <property type="evidence" value="ECO:0007669"/>
    <property type="project" value="EnsemblMetazoa"/>
</dbReference>
<dbReference type="GO" id="GO:0035725">
    <property type="term" value="P:sodium ion transmembrane transport"/>
    <property type="evidence" value="ECO:0000318"/>
    <property type="project" value="GO_Central"/>
</dbReference>
<dbReference type="FunFam" id="1.10.287.770:FF:000001">
    <property type="entry name" value="Acid-sensing ion channel subunit 1"/>
    <property type="match status" value="1"/>
</dbReference>
<dbReference type="FunFam" id="2.60.470.10:FF:000004">
    <property type="entry name" value="Degenerin unc-8"/>
    <property type="match status" value="1"/>
</dbReference>
<dbReference type="Gene3D" id="2.60.470.10">
    <property type="entry name" value="Acid-sensing ion channels like domains"/>
    <property type="match status" value="1"/>
</dbReference>
<dbReference type="Gene3D" id="1.10.287.770">
    <property type="entry name" value="YojJ-like"/>
    <property type="match status" value="1"/>
</dbReference>
<dbReference type="InterPro" id="IPR004726">
    <property type="entry name" value="Deg-1"/>
</dbReference>
<dbReference type="InterPro" id="IPR001873">
    <property type="entry name" value="ENaC"/>
</dbReference>
<dbReference type="InterPro" id="IPR020903">
    <property type="entry name" value="ENaC_CS"/>
</dbReference>
<dbReference type="InterPro" id="IPR054001">
    <property type="entry name" value="Mec-4/10_cyt"/>
</dbReference>
<dbReference type="NCBIfam" id="TIGR00867">
    <property type="entry name" value="deg-1"/>
    <property type="match status" value="1"/>
</dbReference>
<dbReference type="PANTHER" id="PTHR11690">
    <property type="entry name" value="AMILORIDE-SENSITIVE SODIUM CHANNEL-RELATED"/>
    <property type="match status" value="1"/>
</dbReference>
<dbReference type="PANTHER" id="PTHR11690:SF275">
    <property type="entry name" value="DEGENERIN MEC-4"/>
    <property type="match status" value="1"/>
</dbReference>
<dbReference type="Pfam" id="PF00858">
    <property type="entry name" value="ASC"/>
    <property type="match status" value="1"/>
</dbReference>
<dbReference type="Pfam" id="PF22214">
    <property type="entry name" value="Mec-4_10_cyt"/>
    <property type="match status" value="1"/>
</dbReference>
<dbReference type="PRINTS" id="PR01078">
    <property type="entry name" value="AMINACHANNEL"/>
</dbReference>
<dbReference type="PROSITE" id="PS01206">
    <property type="entry name" value="ASC"/>
    <property type="match status" value="1"/>
</dbReference>